<name>SMD_TRIRC</name>
<evidence type="ECO:0000250" key="1">
    <source>
        <dbReference type="UniProtKB" id="B8NQ51"/>
    </source>
</evidence>
<evidence type="ECO:0000250" key="2">
    <source>
        <dbReference type="UniProtKB" id="Q8I914"/>
    </source>
</evidence>
<evidence type="ECO:0000255" key="3"/>
<evidence type="ECO:0000303" key="4">
    <source>
    </source>
</evidence>
<evidence type="ECO:0000305" key="5"/>
<evidence type="ECO:0000312" key="6">
    <source>
        <dbReference type="EMBL" id="EGD85130.1"/>
    </source>
</evidence>
<sequence>MISLLRLCSFLAAGSILVQGSPIIAPSAPTWDTPNNFTSPSNFTSKPGNEASPFWLIGHRVLTKGGVRAALGHGANALEVDITGWWNGWYGDHDGLPSSAGDKVADLFDEIAYRRRQGAQVSFVWLDLKNPDFNKNGVNIVSLMTLCREKLEPAGVRVLFGFYSSQTSGHAFRFVKQVLNENEAIGIDGSFEPVEKDFEKNGIRVEKRVFSSGLFNPDFNFGTCQDRASGVCTQLREGKESHKFGKVFGWTVSSYTRKDHVYKMMEVGVDGLIYGFVASHYYNHKDIRQTIRTIRGWLDEHRDTHRLATNDDNPWSMSSRKSS</sequence>
<organism>
    <name type="scientific">Trichophyton rubrum (strain ATCC MYA-4607 / CBS 118892)</name>
    <name type="common">Athlete's foot fungus</name>
    <dbReference type="NCBI Taxonomy" id="559305"/>
    <lineage>
        <taxon>Eukaryota</taxon>
        <taxon>Fungi</taxon>
        <taxon>Dikarya</taxon>
        <taxon>Ascomycota</taxon>
        <taxon>Pezizomycotina</taxon>
        <taxon>Eurotiomycetes</taxon>
        <taxon>Eurotiomycetidae</taxon>
        <taxon>Onygenales</taxon>
        <taxon>Arthrodermataceae</taxon>
        <taxon>Trichophyton</taxon>
    </lineage>
</organism>
<proteinExistence type="inferred from homology"/>
<protein>
    <recommendedName>
        <fullName evidence="4">Sphingomyelinase D</fullName>
        <shortName evidence="4">SMase D</shortName>
        <ecNumber evidence="1">3.1.4.41</ecNumber>
    </recommendedName>
</protein>
<keyword id="KW-0378">Hydrolase</keyword>
<keyword id="KW-0442">Lipid degradation</keyword>
<keyword id="KW-0443">Lipid metabolism</keyword>
<keyword id="KW-0460">Magnesium</keyword>
<keyword id="KW-0479">Metal-binding</keyword>
<keyword id="KW-1185">Reference proteome</keyword>
<keyword id="KW-0964">Secreted</keyword>
<keyword id="KW-0732">Signal</keyword>
<keyword id="KW-0843">Virulence</keyword>
<reference key="1">
    <citation type="journal article" date="2012" name="MBio">
        <title>Comparative genome analysis of Trichophyton rubrum and related dermatophytes reveals candidate genes involved in infection.</title>
        <authorList>
            <person name="Martinez D.A."/>
            <person name="Oliver B.G."/>
            <person name="Graeser Y."/>
            <person name="Goldberg J.M."/>
            <person name="Li W."/>
            <person name="Martinez-Rossi N.M."/>
            <person name="Monod M."/>
            <person name="Shelest E."/>
            <person name="Barton R.C."/>
            <person name="Birch E."/>
            <person name="Brakhage A.A."/>
            <person name="Chen Z."/>
            <person name="Gurr S.J."/>
            <person name="Heiman D."/>
            <person name="Heitman J."/>
            <person name="Kosti I."/>
            <person name="Rossi A."/>
            <person name="Saif S."/>
            <person name="Samalova M."/>
            <person name="Saunders C.W."/>
            <person name="Shea T."/>
            <person name="Summerbell R.C."/>
            <person name="Xu J."/>
            <person name="Young S."/>
            <person name="Zeng Q."/>
            <person name="Birren B.W."/>
            <person name="Cuomo C.A."/>
            <person name="White T.C."/>
        </authorList>
    </citation>
    <scope>NUCLEOTIDE SEQUENCE [LARGE SCALE GENOMIC DNA]</scope>
    <source>
        <strain>ATCC MYA-4607 / CBS 118892</strain>
    </source>
</reference>
<reference key="2">
    <citation type="journal article" date="2013" name="PLoS ONE">
        <title>Identification of new sphingomyelinases D in pathogenic fungi and other pathogenic organisms.</title>
        <authorList>
            <person name="Dias-Lopes C."/>
            <person name="Neshich I.A."/>
            <person name="Neshich G."/>
            <person name="Ortega J.M."/>
            <person name="Granier C."/>
            <person name="Chavez-Olortegui C."/>
            <person name="Molina F."/>
            <person name="Felicori L."/>
        </authorList>
    </citation>
    <scope>IDENTIFICATION</scope>
</reference>
<comment type="function">
    <text evidence="1">Catalyzes the hydrolysis of sphingomyelin. Sphingomyelinases D are produced by some spider in their venoms, but also by arthropods such as ticks, or pathogenic bacteria and fungi. They might play a role in pathogenicity through different mechanisms, such as membrane destabilization and host cell penetration, but also pulmonary inflammation and cutaneous lesions.</text>
</comment>
<comment type="catalytic activity">
    <reaction evidence="1">
        <text>a sphingomyelin + H2O = an N-acylsphing-4-enine 1-phosphate + choline + H(+)</text>
        <dbReference type="Rhea" id="RHEA:20984"/>
        <dbReference type="ChEBI" id="CHEBI:15354"/>
        <dbReference type="ChEBI" id="CHEBI:15377"/>
        <dbReference type="ChEBI" id="CHEBI:15378"/>
        <dbReference type="ChEBI" id="CHEBI:17636"/>
        <dbReference type="ChEBI" id="CHEBI:57674"/>
        <dbReference type="EC" id="3.1.4.41"/>
    </reaction>
</comment>
<comment type="cofactor">
    <cofactor evidence="2">
        <name>Mg(2+)</name>
        <dbReference type="ChEBI" id="CHEBI:18420"/>
    </cofactor>
    <text evidence="2">Binds 1 Mg(2+) ion per subunit.</text>
</comment>
<comment type="subcellular location">
    <subcellularLocation>
        <location evidence="5">Secreted</location>
    </subcellularLocation>
</comment>
<comment type="domain">
    <text evidence="4">The SMD-tail motif is highly conserved and may be responsible for structural stabilization.</text>
</comment>
<comment type="similarity">
    <text evidence="5">Belongs to the sphingomyelinase D/phospholipase D family.</text>
</comment>
<dbReference type="EC" id="3.1.4.41" evidence="1"/>
<dbReference type="EMBL" id="GG700648">
    <property type="protein sequence ID" value="EGD85130.1"/>
    <property type="molecule type" value="Genomic_DNA"/>
</dbReference>
<dbReference type="RefSeq" id="XP_003239421.1">
    <property type="nucleotide sequence ID" value="XM_003239373.1"/>
</dbReference>
<dbReference type="SMR" id="F2SCC4"/>
<dbReference type="GeneID" id="10374817"/>
<dbReference type="VEuPathDB" id="FungiDB:TERG_01406"/>
<dbReference type="eggNOG" id="ENOG502S5U7">
    <property type="taxonomic scope" value="Eukaryota"/>
</dbReference>
<dbReference type="HOGENOM" id="CLU_059400_0_0_1"/>
<dbReference type="InParanoid" id="F2SCC4"/>
<dbReference type="OMA" id="FVWFDIK"/>
<dbReference type="OrthoDB" id="4907280at2759"/>
<dbReference type="Proteomes" id="UP000008864">
    <property type="component" value="Unassembled WGS sequence"/>
</dbReference>
<dbReference type="GO" id="GO:0005576">
    <property type="term" value="C:extracellular region"/>
    <property type="evidence" value="ECO:0007669"/>
    <property type="project" value="UniProtKB-SubCell"/>
</dbReference>
<dbReference type="GO" id="GO:0046872">
    <property type="term" value="F:metal ion binding"/>
    <property type="evidence" value="ECO:0007669"/>
    <property type="project" value="UniProtKB-KW"/>
</dbReference>
<dbReference type="GO" id="GO:0050290">
    <property type="term" value="F:sphingomyelin phosphodiesterase D activity"/>
    <property type="evidence" value="ECO:0007669"/>
    <property type="project" value="UniProtKB-EC"/>
</dbReference>
<dbReference type="GO" id="GO:0016042">
    <property type="term" value="P:lipid catabolic process"/>
    <property type="evidence" value="ECO:0007669"/>
    <property type="project" value="UniProtKB-KW"/>
</dbReference>
<dbReference type="Gene3D" id="3.20.20.190">
    <property type="entry name" value="Phosphatidylinositol (PI) phosphodiesterase"/>
    <property type="match status" value="1"/>
</dbReference>
<dbReference type="InterPro" id="IPR017946">
    <property type="entry name" value="PLC-like_Pdiesterase_TIM-brl"/>
</dbReference>
<gene>
    <name evidence="6" type="ORF">TERG_01406</name>
</gene>
<feature type="signal peptide" evidence="3">
    <location>
        <begin position="1"/>
        <end position="20"/>
    </location>
</feature>
<feature type="chain" id="PRO_0000431988" description="Sphingomyelinase D" evidence="3">
    <location>
        <begin position="21"/>
        <end position="323"/>
    </location>
</feature>
<feature type="short sequence motif" description="SMD-tail" evidence="3">
    <location>
        <begin position="308"/>
        <end position="315"/>
    </location>
</feature>
<feature type="active site" evidence="2">
    <location>
        <position position="59"/>
    </location>
</feature>
<feature type="binding site" evidence="2">
    <location>
        <position position="79"/>
    </location>
    <ligand>
        <name>Mg(2+)</name>
        <dbReference type="ChEBI" id="CHEBI:18420"/>
    </ligand>
</feature>
<feature type="binding site" evidence="2">
    <location>
        <position position="81"/>
    </location>
    <ligand>
        <name>Mg(2+)</name>
        <dbReference type="ChEBI" id="CHEBI:18420"/>
    </ligand>
</feature>
<feature type="binding site" evidence="2">
    <location>
        <position position="127"/>
    </location>
    <ligand>
        <name>Mg(2+)</name>
        <dbReference type="ChEBI" id="CHEBI:18420"/>
    </ligand>
</feature>
<accession>F2SCC4</accession>